<comment type="function">
    <text evidence="3">Electron transport protein for the cytochrome systems.</text>
</comment>
<comment type="cofactor">
    <cofactor evidence="3">
        <name>[3Fe-4S] cluster</name>
        <dbReference type="ChEBI" id="CHEBI:21137"/>
    </cofactor>
    <text evidence="3">Binds 1 [3Fe-4S] cluster.</text>
</comment>
<comment type="sequence caution" evidence="3">
    <conflict type="frameshift">
        <sequence resource="EMBL-CDS" id="AAC28891"/>
    </conflict>
</comment>
<feature type="chain" id="PRO_0000159316" description="Uncharacterized P450-system 3Fe-4S ferredoxin blr2145.1">
    <location>
        <begin position="1"/>
        <end position="96"/>
    </location>
</feature>
<feature type="region of interest" description="Disordered" evidence="2">
    <location>
        <begin position="67"/>
        <end position="96"/>
    </location>
</feature>
<feature type="compositionally biased region" description="Basic and acidic residues" evidence="2">
    <location>
        <begin position="83"/>
        <end position="96"/>
    </location>
</feature>
<feature type="binding site" evidence="1">
    <location>
        <position position="10"/>
    </location>
    <ligand>
        <name>[3Fe-4S] cluster</name>
        <dbReference type="ChEBI" id="CHEBI:21137"/>
    </ligand>
</feature>
<feature type="binding site" evidence="1">
    <location>
        <position position="16"/>
    </location>
    <ligand>
        <name>[3Fe-4S] cluster</name>
        <dbReference type="ChEBI" id="CHEBI:21137"/>
    </ligand>
</feature>
<feature type="binding site" evidence="1">
    <location>
        <position position="55"/>
    </location>
    <ligand>
        <name>[3Fe-4S] cluster</name>
        <dbReference type="ChEBI" id="CHEBI:21137"/>
    </ligand>
</feature>
<feature type="sequence conflict" description="In Ref. 1 and 2." evidence="3" ref="1 2">
    <original>E</original>
    <variation>V</variation>
    <location>
        <position position="85"/>
    </location>
</feature>
<sequence>MRVMVDQDLCGTSGQCVLTLPGTFRQREPDGVAEVCVATVPHALHAAVRLAASQCPVAAIRVIESDAGDGERASADPAPSPAEAERHAAKDQHNLG</sequence>
<protein>
    <recommendedName>
        <fullName>Uncharacterized P450-system 3Fe-4S ferredoxin blr2145.1</fullName>
    </recommendedName>
</protein>
<organism>
    <name type="scientific">Bradyrhizobium diazoefficiens (strain JCM 10833 / BCRC 13528 / IAM 13628 / NBRC 14792 / USDA 110)</name>
    <dbReference type="NCBI Taxonomy" id="224911"/>
    <lineage>
        <taxon>Bacteria</taxon>
        <taxon>Pseudomonadati</taxon>
        <taxon>Pseudomonadota</taxon>
        <taxon>Alphaproteobacteria</taxon>
        <taxon>Hyphomicrobiales</taxon>
        <taxon>Nitrobacteraceae</taxon>
        <taxon>Bradyrhizobium</taxon>
    </lineage>
</organism>
<reference key="1">
    <citation type="journal article" date="1993" name="Appl. Environ. Microbiol.">
        <title>Cloning and mutagenesis of a cytochrome P-450 locus from Bradyrhizobium japonicum that is expressed anaerobically and symbiotically.</title>
        <authorList>
            <person name="Tully R.E."/>
            <person name="Keister D.L."/>
        </authorList>
    </citation>
    <scope>NUCLEOTIDE SEQUENCE [GENOMIC DNA]</scope>
    <source>
        <strain>JCM 10833 / BCRC 13528 / IAM 13628 / NBRC 14792 / USDA 110</strain>
    </source>
</reference>
<reference key="2">
    <citation type="journal article" date="1998" name="Biochim. Biophys. Acta">
        <title>Identification and sequencing of a cytochrome P450 gene cluster from Bradyrhizobium japonicum.</title>
        <authorList>
            <person name="Tully R.E."/>
            <person name="van Berkum P."/>
            <person name="Lovins K.W."/>
            <person name="Keister D.L."/>
        </authorList>
    </citation>
    <scope>NUCLEOTIDE SEQUENCE [GENOMIC DNA]</scope>
    <source>
        <strain>JCM 10833 / BCRC 13528 / IAM 13628 / NBRC 14792 / USDA 110</strain>
    </source>
</reference>
<reference key="3">
    <citation type="journal article" date="2002" name="DNA Res.">
        <title>Complete genomic sequence of nitrogen-fixing symbiotic bacterium Bradyrhizobium japonicum USDA110.</title>
        <authorList>
            <person name="Kaneko T."/>
            <person name="Nakamura Y."/>
            <person name="Sato S."/>
            <person name="Minamisawa K."/>
            <person name="Uchiumi T."/>
            <person name="Sasamoto S."/>
            <person name="Watanabe A."/>
            <person name="Idesawa K."/>
            <person name="Iriguchi M."/>
            <person name="Kawashima K."/>
            <person name="Kohara M."/>
            <person name="Matsumoto M."/>
            <person name="Shimpo S."/>
            <person name="Tsuruoka H."/>
            <person name="Wada T."/>
            <person name="Yamada M."/>
            <person name="Tabata S."/>
        </authorList>
    </citation>
    <scope>NUCLEOTIDE SEQUENCE [LARGE SCALE GENOMIC DNA]</scope>
    <source>
        <strain>JCM 10833 / BCRC 13528 / IAM 13628 / NBRC 14792 / USDA 110</strain>
    </source>
</reference>
<name>FE45_BRADU</name>
<evidence type="ECO:0000250" key="1"/>
<evidence type="ECO:0000256" key="2">
    <source>
        <dbReference type="SAM" id="MobiDB-lite"/>
    </source>
</evidence>
<evidence type="ECO:0000305" key="3"/>
<gene>
    <name type="ordered locus">blr2145.1</name>
</gene>
<keyword id="KW-0003">3Fe-4S</keyword>
<keyword id="KW-0249">Electron transport</keyword>
<keyword id="KW-0408">Iron</keyword>
<keyword id="KW-0411">Iron-sulfur</keyword>
<keyword id="KW-0479">Metal-binding</keyword>
<keyword id="KW-1185">Reference proteome</keyword>
<keyword id="KW-0813">Transport</keyword>
<proteinExistence type="predicted"/>
<accession>Q45218</accession>
<dbReference type="EMBL" id="U12678">
    <property type="protein sequence ID" value="AAC28891.1"/>
    <property type="status" value="ALT_FRAME"/>
    <property type="molecule type" value="Genomic_DNA"/>
</dbReference>
<dbReference type="EMBL" id="BA000040">
    <property type="status" value="NOT_ANNOTATED_CDS"/>
    <property type="molecule type" value="Genomic_DNA"/>
</dbReference>
<dbReference type="PIR" id="I40210">
    <property type="entry name" value="I40210"/>
</dbReference>
<dbReference type="RefSeq" id="WP_014497729.1">
    <property type="nucleotide sequence ID" value="NZ_CP011360.1"/>
</dbReference>
<dbReference type="SMR" id="Q45218"/>
<dbReference type="STRING" id="224911.AAV28_07570"/>
<dbReference type="PATRIC" id="fig|224911.44.peg.1661"/>
<dbReference type="InParanoid" id="Q45218"/>
<dbReference type="Proteomes" id="UP000002526">
    <property type="component" value="Chromosome"/>
</dbReference>
<dbReference type="GO" id="GO:0051538">
    <property type="term" value="F:3 iron, 4 sulfur cluster binding"/>
    <property type="evidence" value="ECO:0007669"/>
    <property type="project" value="UniProtKB-KW"/>
</dbReference>
<dbReference type="GO" id="GO:0009055">
    <property type="term" value="F:electron transfer activity"/>
    <property type="evidence" value="ECO:0007669"/>
    <property type="project" value="InterPro"/>
</dbReference>
<dbReference type="GO" id="GO:0005506">
    <property type="term" value="F:iron ion binding"/>
    <property type="evidence" value="ECO:0007669"/>
    <property type="project" value="InterPro"/>
</dbReference>
<dbReference type="Gene3D" id="3.30.70.20">
    <property type="match status" value="1"/>
</dbReference>
<dbReference type="InterPro" id="IPR001080">
    <property type="entry name" value="3Fe4S_ferredoxin"/>
</dbReference>
<dbReference type="InterPro" id="IPR051269">
    <property type="entry name" value="Fe-S_cluster_ET"/>
</dbReference>
<dbReference type="PANTHER" id="PTHR36923">
    <property type="entry name" value="FERREDOXIN"/>
    <property type="match status" value="1"/>
</dbReference>
<dbReference type="PANTHER" id="PTHR36923:SF3">
    <property type="entry name" value="FERREDOXIN"/>
    <property type="match status" value="1"/>
</dbReference>
<dbReference type="Pfam" id="PF13459">
    <property type="entry name" value="Fer4_15"/>
    <property type="match status" value="1"/>
</dbReference>
<dbReference type="PRINTS" id="PR00352">
    <property type="entry name" value="3FE4SFRDOXIN"/>
</dbReference>
<dbReference type="SUPFAM" id="SSF54862">
    <property type="entry name" value="4Fe-4S ferredoxins"/>
    <property type="match status" value="1"/>
</dbReference>